<keyword id="KW-0150">Chloroplast</keyword>
<keyword id="KW-0472">Membrane</keyword>
<keyword id="KW-0602">Photosynthesis</keyword>
<keyword id="KW-0604">Photosystem II</keyword>
<keyword id="KW-0934">Plastid</keyword>
<keyword id="KW-0793">Thylakoid</keyword>
<keyword id="KW-0812">Transmembrane</keyword>
<keyword id="KW-1133">Transmembrane helix</keyword>
<reference key="1">
    <citation type="submission" date="2002-07" db="EMBL/GenBank/DDBJ databases">
        <title>Parsing out signal and noise for seed-plant phylogenetic inference.</title>
        <authorList>
            <person name="Graham S.W."/>
            <person name="Rai H.S."/>
            <person name="Ikegami K."/>
            <person name="Reeves P.A."/>
            <person name="Olmstead R.G."/>
        </authorList>
    </citation>
    <scope>NUCLEOTIDE SEQUENCE [GENOMIC DNA]</scope>
</reference>
<feature type="chain" id="PRO_0000217901" description="Photosystem II reaction center protein T">
    <location>
        <begin position="1"/>
        <end position="35"/>
    </location>
</feature>
<feature type="transmembrane region" description="Helical" evidence="1">
    <location>
        <begin position="3"/>
        <end position="23"/>
    </location>
</feature>
<evidence type="ECO:0000255" key="1">
    <source>
        <dbReference type="HAMAP-Rule" id="MF_00808"/>
    </source>
</evidence>
<gene>
    <name evidence="1" type="primary">psbT</name>
</gene>
<sequence>MEALVYTFLLISTLGIIFFAIFFRDPPRISTKKMK</sequence>
<organism>
    <name type="scientific">Aristolochia macrophylla</name>
    <name type="common">Dutchman's pipe vine</name>
    <name type="synonym">Isotrema macrophyllum</name>
    <dbReference type="NCBI Taxonomy" id="12949"/>
    <lineage>
        <taxon>Eukaryota</taxon>
        <taxon>Viridiplantae</taxon>
        <taxon>Streptophyta</taxon>
        <taxon>Embryophyta</taxon>
        <taxon>Tracheophyta</taxon>
        <taxon>Spermatophyta</taxon>
        <taxon>Magnoliopsida</taxon>
        <taxon>Magnoliidae</taxon>
        <taxon>Piperales</taxon>
        <taxon>Aristolochiaceae</taxon>
        <taxon>Aristolochia</taxon>
    </lineage>
</organism>
<accession>Q6EYL5</accession>
<proteinExistence type="inferred from homology"/>
<name>PSBT_ARIMA</name>
<comment type="function">
    <text evidence="1">Found at the monomer-monomer interface of the photosystem II (PS II) dimer, plays a role in assembly and dimerization of PSII. PSII is a light-driven water plastoquinone oxidoreductase, using light energy to abstract electrons from H(2)O, generating a proton gradient subsequently used for ATP formation.</text>
</comment>
<comment type="subunit">
    <text evidence="1">PSII is composed of 1 copy each of membrane proteins PsbA, PsbB, PsbC, PsbD, PsbE, PsbF, PsbH, PsbI, PsbJ, PsbK, PsbL, PsbM, PsbT, PsbY, PsbZ, Psb30/Ycf12, at least 3 peripheral proteins of the oxygen-evolving complex and a large number of cofactors. It forms dimeric complexes.</text>
</comment>
<comment type="subcellular location">
    <subcellularLocation>
        <location evidence="1">Plastid</location>
        <location evidence="1">Chloroplast thylakoid membrane</location>
        <topology evidence="1">Single-pass membrane protein</topology>
    </subcellularLocation>
</comment>
<comment type="similarity">
    <text evidence="1">Belongs to the PsbT family.</text>
</comment>
<protein>
    <recommendedName>
        <fullName evidence="1">Photosystem II reaction center protein T</fullName>
        <shortName evidence="1">PSII-T</shortName>
    </recommendedName>
</protein>
<geneLocation type="chloroplast"/>
<dbReference type="EMBL" id="AF528893">
    <property type="protein sequence ID" value="AAQ09358.1"/>
    <property type="molecule type" value="Genomic_DNA"/>
</dbReference>
<dbReference type="RefSeq" id="YP_009574943.1">
    <property type="nucleotide sequence ID" value="NC_041453.1"/>
</dbReference>
<dbReference type="SMR" id="Q6EYL5"/>
<dbReference type="GeneID" id="39698654"/>
<dbReference type="GO" id="GO:0009535">
    <property type="term" value="C:chloroplast thylakoid membrane"/>
    <property type="evidence" value="ECO:0007669"/>
    <property type="project" value="UniProtKB-SubCell"/>
</dbReference>
<dbReference type="GO" id="GO:0009539">
    <property type="term" value="C:photosystem II reaction center"/>
    <property type="evidence" value="ECO:0007669"/>
    <property type="project" value="InterPro"/>
</dbReference>
<dbReference type="GO" id="GO:0015979">
    <property type="term" value="P:photosynthesis"/>
    <property type="evidence" value="ECO:0007669"/>
    <property type="project" value="UniProtKB-UniRule"/>
</dbReference>
<dbReference type="HAMAP" id="MF_00808">
    <property type="entry name" value="PSII_PsbT"/>
    <property type="match status" value="1"/>
</dbReference>
<dbReference type="InterPro" id="IPR001743">
    <property type="entry name" value="PSII_PsbT"/>
</dbReference>
<dbReference type="InterPro" id="IPR037268">
    <property type="entry name" value="PSII_PsbT_sf"/>
</dbReference>
<dbReference type="PANTHER" id="PTHR36411">
    <property type="match status" value="1"/>
</dbReference>
<dbReference type="PANTHER" id="PTHR36411:SF2">
    <property type="entry name" value="PHOTOSYSTEM II REACTION CENTER PROTEIN T"/>
    <property type="match status" value="1"/>
</dbReference>
<dbReference type="Pfam" id="PF01405">
    <property type="entry name" value="PsbT"/>
    <property type="match status" value="1"/>
</dbReference>
<dbReference type="SUPFAM" id="SSF161029">
    <property type="entry name" value="Photosystem II reaction center protein T, PsbT"/>
    <property type="match status" value="1"/>
</dbReference>